<reference key="1">
    <citation type="journal article" date="1994" name="J. Mol. Biol.">
        <title>Complete sequence of the mitochondrial DNA of the chlorophyte alga Prototheca wickerhamii. Gene content and genome organization.</title>
        <authorList>
            <person name="Wolff G."/>
            <person name="Plante I."/>
            <person name="Lang B.F."/>
            <person name="Kueck U."/>
            <person name="Burger G."/>
        </authorList>
    </citation>
    <scope>NUCLEOTIDE SEQUENCE [GENOMIC DNA]</scope>
    <source>
        <strain>263-11</strain>
    </source>
</reference>
<protein>
    <recommendedName>
        <fullName>NADH-ubiquinone oxidoreductase chain 4</fullName>
        <ecNumber>7.1.1.2</ecNumber>
    </recommendedName>
    <alternativeName>
        <fullName>NADH dehydrogenase subunit 4</fullName>
    </alternativeName>
</protein>
<geneLocation type="mitochondrion"/>
<name>NU4M_PROWI</name>
<dbReference type="EC" id="7.1.1.2"/>
<dbReference type="EMBL" id="U02970">
    <property type="protein sequence ID" value="AAD12635.1"/>
    <property type="molecule type" value="Genomic_DNA"/>
</dbReference>
<dbReference type="PIR" id="T11916">
    <property type="entry name" value="T11916"/>
</dbReference>
<dbReference type="RefSeq" id="NP_042247.1">
    <property type="nucleotide sequence ID" value="NC_001613.1"/>
</dbReference>
<dbReference type="SMR" id="Q37617"/>
<dbReference type="GeneID" id="802106"/>
<dbReference type="GO" id="GO:0031966">
    <property type="term" value="C:mitochondrial membrane"/>
    <property type="evidence" value="ECO:0007669"/>
    <property type="project" value="UniProtKB-SubCell"/>
</dbReference>
<dbReference type="GO" id="GO:0008137">
    <property type="term" value="F:NADH dehydrogenase (ubiquinone) activity"/>
    <property type="evidence" value="ECO:0007669"/>
    <property type="project" value="UniProtKB-EC"/>
</dbReference>
<dbReference type="GO" id="GO:0048039">
    <property type="term" value="F:ubiquinone binding"/>
    <property type="evidence" value="ECO:0007669"/>
    <property type="project" value="TreeGrafter"/>
</dbReference>
<dbReference type="GO" id="GO:0042773">
    <property type="term" value="P:ATP synthesis coupled electron transport"/>
    <property type="evidence" value="ECO:0007669"/>
    <property type="project" value="InterPro"/>
</dbReference>
<dbReference type="GO" id="GO:0015990">
    <property type="term" value="P:electron transport coupled proton transport"/>
    <property type="evidence" value="ECO:0007669"/>
    <property type="project" value="TreeGrafter"/>
</dbReference>
<dbReference type="InterPro" id="IPR010227">
    <property type="entry name" value="NADH_Q_OxRdtase_chainM/4"/>
</dbReference>
<dbReference type="InterPro" id="IPR003918">
    <property type="entry name" value="NADH_UbQ_OxRdtase"/>
</dbReference>
<dbReference type="InterPro" id="IPR001750">
    <property type="entry name" value="ND/Mrp_TM"/>
</dbReference>
<dbReference type="NCBIfam" id="TIGR01972">
    <property type="entry name" value="NDH_I_M"/>
    <property type="match status" value="1"/>
</dbReference>
<dbReference type="NCBIfam" id="NF004499">
    <property type="entry name" value="PRK05846.1-3"/>
    <property type="match status" value="1"/>
</dbReference>
<dbReference type="PANTHER" id="PTHR43507">
    <property type="entry name" value="NADH-UBIQUINONE OXIDOREDUCTASE CHAIN 4"/>
    <property type="match status" value="1"/>
</dbReference>
<dbReference type="PANTHER" id="PTHR43507:SF1">
    <property type="entry name" value="NADH-UBIQUINONE OXIDOREDUCTASE CHAIN 4"/>
    <property type="match status" value="1"/>
</dbReference>
<dbReference type="Pfam" id="PF00361">
    <property type="entry name" value="Proton_antipo_M"/>
    <property type="match status" value="1"/>
</dbReference>
<dbReference type="PRINTS" id="PR01437">
    <property type="entry name" value="NUOXDRDTASE4"/>
</dbReference>
<evidence type="ECO:0000250" key="1"/>
<evidence type="ECO:0000255" key="2"/>
<evidence type="ECO:0000305" key="3"/>
<comment type="function">
    <text evidence="1">Core subunit of the mitochondrial membrane respiratory chain NADH dehydrogenase (Complex I) that is believed to belong to the minimal assembly required for catalysis. Complex I functions in the transfer of electrons from NADH to the respiratory chain. The immediate electron acceptor for the enzyme is believed to be ubiquinone (By similarity).</text>
</comment>
<comment type="catalytic activity">
    <reaction>
        <text>a ubiquinone + NADH + 5 H(+)(in) = a ubiquinol + NAD(+) + 4 H(+)(out)</text>
        <dbReference type="Rhea" id="RHEA:29091"/>
        <dbReference type="Rhea" id="RHEA-COMP:9565"/>
        <dbReference type="Rhea" id="RHEA-COMP:9566"/>
        <dbReference type="ChEBI" id="CHEBI:15378"/>
        <dbReference type="ChEBI" id="CHEBI:16389"/>
        <dbReference type="ChEBI" id="CHEBI:17976"/>
        <dbReference type="ChEBI" id="CHEBI:57540"/>
        <dbReference type="ChEBI" id="CHEBI:57945"/>
        <dbReference type="EC" id="7.1.1.2"/>
    </reaction>
</comment>
<comment type="subcellular location">
    <subcellularLocation>
        <location evidence="1">Mitochondrion membrane</location>
        <topology evidence="1">Multi-pass membrane protein</topology>
    </subcellularLocation>
</comment>
<comment type="similarity">
    <text evidence="3">Belongs to the complex I subunit 4 family.</text>
</comment>
<sequence length="523" mass="58946">MNRNEISFIYYVKIKLYLYNSFFIMSYIEMVLAIPLLGAIALLFVPSWKTQTIRNIALNSSLLTFLISLLLWIEFDSSSALFQFTDGVCSPNVYSDVTLAKAASSSSFSALNFALGVDGISLFFIILTTLLVPICILVSWNNIEVYVKEYCIAFLVLETLMLTVFSVLDLLLFYIFFESVLIPMFIIIGVWGSRERKIRAAYQFFLYTLFGSVLMLLAILLIYFQTGTLDIEMLYLSDFSETRQCILWLAFFASFAVKVPMVPVHIWLPEAHVEAPTAGSVILAGILLKLGTYGFLRFSIPLFPYACIYFTPLIYTMSVIAIVYTSCTTIRQIDLKKIIAYSSVAHMNFVTIGLFSQNTQGIEGSILLMISHGLVSPALFLCVGVLYDRHKTRLLRYYSGCGQTMPIFALLFVFFTMANISLPGTSSFPGEFLVFIGSYQNNSFVAFCAATGMVLGAAYALWLCNRLIYGVSKPDFINTWSDVNRREFFMFAPLIAGILWIGVYPEPFLDAMHCSCIYLLYAQ</sequence>
<organism>
    <name type="scientific">Prototheca wickerhamii</name>
    <dbReference type="NCBI Taxonomy" id="3111"/>
    <lineage>
        <taxon>Eukaryota</taxon>
        <taxon>Viridiplantae</taxon>
        <taxon>Chlorophyta</taxon>
        <taxon>core chlorophytes</taxon>
        <taxon>Trebouxiophyceae</taxon>
        <taxon>Chlorellales</taxon>
        <taxon>Chlorellaceae</taxon>
        <taxon>Prototheca</taxon>
    </lineage>
</organism>
<proteinExistence type="inferred from homology"/>
<gene>
    <name type="primary">ND4</name>
    <name type="synonym">NAD4</name>
</gene>
<feature type="chain" id="PRO_0000117979" description="NADH-ubiquinone oxidoreductase chain 4">
    <location>
        <begin position="1"/>
        <end position="523"/>
    </location>
</feature>
<feature type="transmembrane region" description="Helical" evidence="2">
    <location>
        <begin position="22"/>
        <end position="42"/>
    </location>
</feature>
<feature type="transmembrane region" description="Helical" evidence="2">
    <location>
        <begin position="62"/>
        <end position="82"/>
    </location>
</feature>
<feature type="transmembrane region" description="Helical" evidence="2">
    <location>
        <begin position="120"/>
        <end position="140"/>
    </location>
</feature>
<feature type="transmembrane region" description="Helical" evidence="2">
    <location>
        <begin position="149"/>
        <end position="169"/>
    </location>
</feature>
<feature type="transmembrane region" description="Helical" evidence="2">
    <location>
        <begin position="170"/>
        <end position="190"/>
    </location>
</feature>
<feature type="transmembrane region" description="Helical" evidence="2">
    <location>
        <begin position="204"/>
        <end position="224"/>
    </location>
</feature>
<feature type="transmembrane region" description="Helical" evidence="2">
    <location>
        <begin position="246"/>
        <end position="266"/>
    </location>
</feature>
<feature type="transmembrane region" description="Helical" evidence="2">
    <location>
        <begin position="276"/>
        <end position="296"/>
    </location>
</feature>
<feature type="transmembrane region" description="Helical" evidence="2">
    <location>
        <begin position="303"/>
        <end position="323"/>
    </location>
</feature>
<feature type="transmembrane region" description="Helical" evidence="2">
    <location>
        <begin position="338"/>
        <end position="358"/>
    </location>
</feature>
<feature type="transmembrane region" description="Helical" evidence="2">
    <location>
        <begin position="366"/>
        <end position="386"/>
    </location>
</feature>
<feature type="transmembrane region" description="Helical" evidence="2">
    <location>
        <begin position="404"/>
        <end position="424"/>
    </location>
</feature>
<feature type="transmembrane region" description="Helical" evidence="2">
    <location>
        <begin position="444"/>
        <end position="464"/>
    </location>
</feature>
<feature type="transmembrane region" description="Helical" evidence="2">
    <location>
        <begin position="488"/>
        <end position="508"/>
    </location>
</feature>
<accession>Q37617</accession>
<keyword id="KW-0249">Electron transport</keyword>
<keyword id="KW-0472">Membrane</keyword>
<keyword id="KW-0496">Mitochondrion</keyword>
<keyword id="KW-0520">NAD</keyword>
<keyword id="KW-0679">Respiratory chain</keyword>
<keyword id="KW-1278">Translocase</keyword>
<keyword id="KW-0812">Transmembrane</keyword>
<keyword id="KW-1133">Transmembrane helix</keyword>
<keyword id="KW-0813">Transport</keyword>
<keyword id="KW-0830">Ubiquinone</keyword>